<reference key="1">
    <citation type="journal article" date="2002" name="Toxicon">
        <title>N-terminal amino acid sequences and some characteristics of fibrinolytic/hemorrhagic metalloproteinases purified from Bothrops jararaca venom.</title>
        <authorList>
            <person name="Maruyama M."/>
            <person name="Sugiki M."/>
            <person name="Anai K."/>
            <person name="Yoshida E."/>
        </authorList>
    </citation>
    <scope>PROTEIN SEQUENCE</scope>
    <scope>FUNCTION</scope>
</reference>
<reference key="2">
    <citation type="journal article" date="1993" name="Enzyme Protein">
        <title>Purification and characterization of low molecular weight fibrinolytic/hemorrhagic enzymes from snake (Bothrops jararaca) venom.</title>
        <authorList>
            <person name="Maruyama M."/>
            <person name="Tanigawa M."/>
            <person name="Sugiki M."/>
            <person name="Yoshida E."/>
            <person name="Mihara H."/>
        </authorList>
    </citation>
    <scope>FUNCTION</scope>
    <scope>CATALYTIC ACTIVITY</scope>
    <scope>ACTIVITY REGULATION</scope>
    <scope>SUBUNIT</scope>
</reference>
<comment type="function">
    <text evidence="3 4">The metalloproteinase is a probable venom zinc protease that induces local hemorrhage in the skin of rats. Degrades type-IV collagen, gelatin, laminin and fibronectin. Has fibrinolytic activities. Has high hemagglutinating activity on red blood cells. Cleaves insulin B chain at 29-His-|-Leu-30, and 38-Ala-|-Leu-39 bonds (PubMed:8087204).</text>
</comment>
<comment type="cofactor">
    <cofactor evidence="1">
        <name>Zn(2+)</name>
        <dbReference type="ChEBI" id="CHEBI:29105"/>
    </cofactor>
    <text evidence="1">Binds 1 zinc ion per subunit.</text>
</comment>
<comment type="activity regulation">
    <text evidence="4">Inhibited by 1,10-phenanthroline and EDTA.</text>
</comment>
<comment type="subunit">
    <text evidence="4">Monomer.</text>
</comment>
<comment type="subcellular location">
    <subcellularLocation>
        <location>Secreted</location>
    </subcellularLocation>
</comment>
<comment type="tissue specificity">
    <text>Expressed by the venom gland.</text>
</comment>
<comment type="similarity">
    <text evidence="5">Belongs to the venom metalloproteinase (M12B) family.</text>
</comment>
<sequence>TPEHQRYIELFLVVDHGMFMKYNGNSDKIYYYIHQMVNIMKXAYXYL</sequence>
<evidence type="ECO:0000250" key="1"/>
<evidence type="ECO:0000255" key="2">
    <source>
        <dbReference type="PROSITE-ProRule" id="PRU00276"/>
    </source>
</evidence>
<evidence type="ECO:0000269" key="3">
    <source>
    </source>
</evidence>
<evidence type="ECO:0000269" key="4">
    <source>
    </source>
</evidence>
<evidence type="ECO:0000305" key="5"/>
<dbReference type="EC" id="3.4.24.-"/>
<dbReference type="GO" id="GO:0005576">
    <property type="term" value="C:extracellular region"/>
    <property type="evidence" value="ECO:0007669"/>
    <property type="project" value="UniProtKB-SubCell"/>
</dbReference>
<dbReference type="GO" id="GO:0046872">
    <property type="term" value="F:metal ion binding"/>
    <property type="evidence" value="ECO:0007669"/>
    <property type="project" value="UniProtKB-KW"/>
</dbReference>
<dbReference type="GO" id="GO:0004222">
    <property type="term" value="F:metalloendopeptidase activity"/>
    <property type="evidence" value="ECO:0007669"/>
    <property type="project" value="InterPro"/>
</dbReference>
<dbReference type="GO" id="GO:0090729">
    <property type="term" value="F:toxin activity"/>
    <property type="evidence" value="ECO:0007669"/>
    <property type="project" value="UniProtKB-KW"/>
</dbReference>
<dbReference type="GO" id="GO:0006508">
    <property type="term" value="P:proteolysis"/>
    <property type="evidence" value="ECO:0007669"/>
    <property type="project" value="UniProtKB-KW"/>
</dbReference>
<dbReference type="Gene3D" id="3.40.390.10">
    <property type="entry name" value="Collagenase (Catalytic Domain)"/>
    <property type="match status" value="1"/>
</dbReference>
<dbReference type="InterPro" id="IPR024079">
    <property type="entry name" value="MetalloPept_cat_dom_sf"/>
</dbReference>
<dbReference type="InterPro" id="IPR001590">
    <property type="entry name" value="Peptidase_M12B"/>
</dbReference>
<dbReference type="Pfam" id="PF01421">
    <property type="entry name" value="Reprolysin"/>
    <property type="match status" value="1"/>
</dbReference>
<dbReference type="SUPFAM" id="SSF55486">
    <property type="entry name" value="Metalloproteases ('zincins'), catalytic domain"/>
    <property type="match status" value="1"/>
</dbReference>
<dbReference type="PROSITE" id="PS50215">
    <property type="entry name" value="ADAM_MEPRO"/>
    <property type="match status" value="1"/>
</dbReference>
<proteinExistence type="evidence at protein level"/>
<protein>
    <recommendedName>
        <fullName>Snake venom metalloproteinase jararafibrase-4</fullName>
        <shortName>SVMP</shortName>
        <ecNumber>3.4.24.-</ecNumber>
    </recommendedName>
    <alternativeName>
        <fullName>Jararafibrase IV</fullName>
    </alternativeName>
</protein>
<organism>
    <name type="scientific">Bothrops jararaca</name>
    <name type="common">Jararaca</name>
    <name type="synonym">Bothrops jajaraca</name>
    <dbReference type="NCBI Taxonomy" id="8724"/>
    <lineage>
        <taxon>Eukaryota</taxon>
        <taxon>Metazoa</taxon>
        <taxon>Chordata</taxon>
        <taxon>Craniata</taxon>
        <taxon>Vertebrata</taxon>
        <taxon>Euteleostomi</taxon>
        <taxon>Lepidosauria</taxon>
        <taxon>Squamata</taxon>
        <taxon>Bifurcata</taxon>
        <taxon>Unidentata</taxon>
        <taxon>Episquamata</taxon>
        <taxon>Toxicofera</taxon>
        <taxon>Serpentes</taxon>
        <taxon>Colubroidea</taxon>
        <taxon>Viperidae</taxon>
        <taxon>Crotalinae</taxon>
        <taxon>Bothrops</taxon>
    </lineage>
</organism>
<keyword id="KW-0106">Calcium</keyword>
<keyword id="KW-0903">Direct protein sequencing</keyword>
<keyword id="KW-1205">Fibrinolytic toxin</keyword>
<keyword id="KW-1200">Hemorrhagic toxin</keyword>
<keyword id="KW-1199">Hemostasis impairing toxin</keyword>
<keyword id="KW-0378">Hydrolase</keyword>
<keyword id="KW-0479">Metal-binding</keyword>
<keyword id="KW-0482">Metalloprotease</keyword>
<keyword id="KW-0645">Protease</keyword>
<keyword id="KW-0964">Secreted</keyword>
<keyword id="KW-0800">Toxin</keyword>
<keyword id="KW-0862">Zinc</keyword>
<name>VMXJ4_BOTJA</name>
<feature type="chain" id="PRO_0000326427" description="Snake venom metalloproteinase jararafibrase-4">
    <location>
        <begin position="1"/>
        <end position="47" status="greater than"/>
    </location>
</feature>
<feature type="domain" description="Peptidase M12B" evidence="2">
    <location>
        <begin position="6"/>
        <end position="47" status="greater than"/>
    </location>
</feature>
<feature type="binding site" evidence="1">
    <location>
        <position position="9"/>
    </location>
    <ligand>
        <name>Ca(2+)</name>
        <dbReference type="ChEBI" id="CHEBI:29108"/>
    </ligand>
</feature>
<feature type="sequence conflict" description="In Ref. 1; AA sequence." evidence="5" ref="1">
    <original>K</original>
    <variation>L</variation>
    <location>
        <position position="41"/>
    </location>
</feature>
<feature type="non-terminal residue">
    <location>
        <position position="47"/>
    </location>
</feature>
<accession>P0C6S6</accession>